<sequence>MASLGLQLVGYILGLLGLLGTLVAMLLPSWRTSSYVGTSIVTAVGFSKGLWMECATHSTGITQCDIYSTLLGLPADIQAAQAMMVTSSAISSLACIVSVVGMRCTVFCQDSRAKDRLAVVGGVFFIIGGLLGFIPVAWNLHGILRDFYSPLVPDSMKFEIGEALYLGIISSLFSLVAGIILCFSCPLQGNRSDYYDSYQAQPLATRGSPRPGQPPKAKSEFNSYSLTGYV</sequence>
<protein>
    <recommendedName>
        <fullName>Claudin-2</fullName>
    </recommendedName>
</protein>
<proteinExistence type="evidence at transcript level"/>
<name>CLD2_CANLF</name>
<feature type="chain" id="PRO_0000144733" description="Claudin-2">
    <location>
        <begin position="1"/>
        <end position="230"/>
    </location>
</feature>
<feature type="topological domain" description="Cytoplasmic" evidence="4">
    <location>
        <begin position="1"/>
        <end position="7"/>
    </location>
</feature>
<feature type="transmembrane region" description="Helical" evidence="4">
    <location>
        <begin position="8"/>
        <end position="28"/>
    </location>
</feature>
<feature type="topological domain" description="Extracellular" evidence="4">
    <location>
        <begin position="29"/>
        <end position="81"/>
    </location>
</feature>
<feature type="transmembrane region" description="Helical" evidence="4">
    <location>
        <begin position="82"/>
        <end position="102"/>
    </location>
</feature>
<feature type="topological domain" description="Cytoplasmic" evidence="4">
    <location>
        <begin position="103"/>
        <end position="116"/>
    </location>
</feature>
<feature type="transmembrane region" description="Helical" evidence="4">
    <location>
        <begin position="117"/>
        <end position="137"/>
    </location>
</feature>
<feature type="topological domain" description="Extracellular" evidence="4">
    <location>
        <begin position="138"/>
        <end position="162"/>
    </location>
</feature>
<feature type="transmembrane region" description="Helical" evidence="4">
    <location>
        <begin position="163"/>
        <end position="183"/>
    </location>
</feature>
<feature type="topological domain" description="Cytoplasmic" evidence="4">
    <location>
        <begin position="184"/>
        <end position="230"/>
    </location>
</feature>
<feature type="region of interest" description="Disordered" evidence="5">
    <location>
        <begin position="205"/>
        <end position="230"/>
    </location>
</feature>
<feature type="region of interest" description="Interaction with TJP1, TJP2 and TJP3" evidence="1">
    <location>
        <begin position="229"/>
        <end position="230"/>
    </location>
</feature>
<feature type="compositionally biased region" description="Polar residues" evidence="5">
    <location>
        <begin position="220"/>
        <end position="230"/>
    </location>
</feature>
<feature type="site" description="Paracellular cation selectivity" evidence="2">
    <location>
        <position position="65"/>
    </location>
</feature>
<feature type="modified residue" description="Phosphoserine" evidence="2">
    <location>
        <position position="219"/>
    </location>
</feature>
<feature type="modified residue" description="Phosphoserine" evidence="2">
    <location>
        <position position="223"/>
    </location>
</feature>
<feature type="disulfide bond" evidence="2">
    <location>
        <begin position="54"/>
        <end position="64"/>
    </location>
</feature>
<feature type="cross-link" description="Glycyl lysine isopeptide (Lys-Gly) (interchain with G-Cter in SUMO)" evidence="1">
    <location>
        <position position="218"/>
    </location>
</feature>
<dbReference type="EMBL" id="AF358907">
    <property type="protein sequence ID" value="AAK51433.1"/>
    <property type="molecule type" value="mRNA"/>
</dbReference>
<dbReference type="RefSeq" id="NP_001003089.1">
    <property type="nucleotide sequence ID" value="NM_001003089.1"/>
</dbReference>
<dbReference type="RefSeq" id="XP_038304733.1">
    <property type="nucleotide sequence ID" value="XM_038448805.1"/>
</dbReference>
<dbReference type="SMR" id="Q95KM6"/>
<dbReference type="BioGRID" id="139573">
    <property type="interactions" value="1"/>
</dbReference>
<dbReference type="FunCoup" id="Q95KM6">
    <property type="interactions" value="114"/>
</dbReference>
<dbReference type="IntAct" id="Q95KM6">
    <property type="interactions" value="1"/>
</dbReference>
<dbReference type="MINT" id="Q95KM6"/>
<dbReference type="STRING" id="9615.ENSCAFP00000044590"/>
<dbReference type="iPTMnet" id="Q95KM6"/>
<dbReference type="SwissPalm" id="Q95KM6"/>
<dbReference type="PaxDb" id="9612-ENSCAFP00000036941"/>
<dbReference type="Ensembl" id="ENSCAFT00030041176.1">
    <property type="protein sequence ID" value="ENSCAFP00030035927.1"/>
    <property type="gene ID" value="ENSCAFG00030022406.1"/>
</dbReference>
<dbReference type="GeneID" id="403649"/>
<dbReference type="KEGG" id="cfa:403649"/>
<dbReference type="CTD" id="9075"/>
<dbReference type="eggNOG" id="ENOG502R10A">
    <property type="taxonomic scope" value="Eukaryota"/>
</dbReference>
<dbReference type="InParanoid" id="Q95KM6"/>
<dbReference type="OrthoDB" id="9446875at2759"/>
<dbReference type="Proteomes" id="UP000002254">
    <property type="component" value="Unplaced"/>
</dbReference>
<dbReference type="Proteomes" id="UP000694429">
    <property type="component" value="Chromosome X"/>
</dbReference>
<dbReference type="Proteomes" id="UP000694542">
    <property type="component" value="Unplaced"/>
</dbReference>
<dbReference type="Proteomes" id="UP000805418">
    <property type="component" value="Unplaced"/>
</dbReference>
<dbReference type="GO" id="GO:0005923">
    <property type="term" value="C:bicellular tight junction"/>
    <property type="evidence" value="ECO:0000250"/>
    <property type="project" value="UniProtKB"/>
</dbReference>
<dbReference type="GO" id="GO:0005886">
    <property type="term" value="C:plasma membrane"/>
    <property type="evidence" value="ECO:0000318"/>
    <property type="project" value="GO_Central"/>
</dbReference>
<dbReference type="GO" id="GO:0070160">
    <property type="term" value="C:tight junction"/>
    <property type="evidence" value="ECO:0000250"/>
    <property type="project" value="UniProtKB"/>
</dbReference>
<dbReference type="GO" id="GO:0042802">
    <property type="term" value="F:identical protein binding"/>
    <property type="evidence" value="ECO:0000250"/>
    <property type="project" value="UniProtKB"/>
</dbReference>
<dbReference type="GO" id="GO:0160187">
    <property type="term" value="F:paracellular tight junction channel activity"/>
    <property type="evidence" value="ECO:0000250"/>
    <property type="project" value="UniProtKB"/>
</dbReference>
<dbReference type="GO" id="GO:0005198">
    <property type="term" value="F:structural molecule activity"/>
    <property type="evidence" value="ECO:0007669"/>
    <property type="project" value="InterPro"/>
</dbReference>
<dbReference type="GO" id="GO:0070830">
    <property type="term" value="P:bicellular tight junction assembly"/>
    <property type="evidence" value="ECO:0000318"/>
    <property type="project" value="GO_Central"/>
</dbReference>
<dbReference type="GO" id="GO:0016338">
    <property type="term" value="P:calcium-independent cell-cell adhesion via plasma membrane cell-adhesion molecules"/>
    <property type="evidence" value="ECO:0000250"/>
    <property type="project" value="UniProtKB"/>
</dbReference>
<dbReference type="GO" id="GO:0098609">
    <property type="term" value="P:cell-cell adhesion"/>
    <property type="evidence" value="ECO:0000250"/>
    <property type="project" value="UniProtKB"/>
</dbReference>
<dbReference type="GO" id="GO:0002227">
    <property type="term" value="P:innate immune response in mucosa"/>
    <property type="evidence" value="ECO:0000250"/>
    <property type="project" value="UniProtKB"/>
</dbReference>
<dbReference type="GO" id="GO:0160184">
    <property type="term" value="P:paracellular transport"/>
    <property type="evidence" value="ECO:0000250"/>
    <property type="project" value="UniProtKB"/>
</dbReference>
<dbReference type="GO" id="GO:0120188">
    <property type="term" value="P:regulation of bile acid secretion"/>
    <property type="evidence" value="ECO:0000250"/>
    <property type="project" value="UniProtKB"/>
</dbReference>
<dbReference type="GO" id="GO:1903985">
    <property type="term" value="P:regulation of intestinal D-glucose absorption"/>
    <property type="evidence" value="ECO:0000250"/>
    <property type="project" value="UniProtKB"/>
</dbReference>
<dbReference type="GO" id="GO:1904729">
    <property type="term" value="P:regulation of intestinal lipid absorption"/>
    <property type="evidence" value="ECO:0000250"/>
    <property type="project" value="UniProtKB"/>
</dbReference>
<dbReference type="FunFam" id="1.20.140.150:FF:000001">
    <property type="entry name" value="Claudin"/>
    <property type="match status" value="1"/>
</dbReference>
<dbReference type="Gene3D" id="1.20.140.150">
    <property type="match status" value="1"/>
</dbReference>
<dbReference type="InterPro" id="IPR006187">
    <property type="entry name" value="Claudin"/>
</dbReference>
<dbReference type="InterPro" id="IPR005411">
    <property type="entry name" value="Claudin2"/>
</dbReference>
<dbReference type="InterPro" id="IPR017974">
    <property type="entry name" value="Claudin_CS"/>
</dbReference>
<dbReference type="InterPro" id="IPR004031">
    <property type="entry name" value="PMP22/EMP/MP20/Claudin"/>
</dbReference>
<dbReference type="PANTHER" id="PTHR12002">
    <property type="entry name" value="CLAUDIN"/>
    <property type="match status" value="1"/>
</dbReference>
<dbReference type="Pfam" id="PF00822">
    <property type="entry name" value="PMP22_Claudin"/>
    <property type="match status" value="1"/>
</dbReference>
<dbReference type="PRINTS" id="PR01077">
    <property type="entry name" value="CLAUDIN"/>
</dbReference>
<dbReference type="PRINTS" id="PR01589">
    <property type="entry name" value="CLAUDIN2"/>
</dbReference>
<dbReference type="PROSITE" id="PS01346">
    <property type="entry name" value="CLAUDIN"/>
    <property type="match status" value="1"/>
</dbReference>
<comment type="function">
    <text evidence="2">Forms paracellular channels: polymerizes in tight junction strands with cation- and water-selective channels through the strands, conveying epithelial permeability in a process known as paracellular tight junction permeability (By similarity). In intestinal epithelium, allows for sodium and water fluxes from the peritoneal side to the lumen of the intestine to regulate nutrient absorption and clear enteric pathogens as part of mucosal immune response (By similarity). In kidney, allows passive sodium and calcium reabsorption across proximal tubules from the lumen back to the bloodstream (By similarity). In the hepatobiliary tract, allows paracellular water and cation fluxes in the hepatic perivenous areas and biliary epithelium to generate bile flow and maintain osmotic gradients (By similarity).</text>
</comment>
<comment type="catalytic activity">
    <reaction evidence="2 3">
        <text>Na(+)(in) = Na(+)(out)</text>
        <dbReference type="Rhea" id="RHEA:34963"/>
        <dbReference type="ChEBI" id="CHEBI:29101"/>
    </reaction>
</comment>
<comment type="catalytic activity">
    <reaction evidence="2 3">
        <text>K(+)(in) = K(+)(out)</text>
        <dbReference type="Rhea" id="RHEA:29463"/>
        <dbReference type="ChEBI" id="CHEBI:29103"/>
    </reaction>
</comment>
<comment type="catalytic activity">
    <reaction evidence="2">
        <text>Rb(+)(in) = Rb(+)(out)</text>
        <dbReference type="Rhea" id="RHEA:78547"/>
        <dbReference type="ChEBI" id="CHEBI:49847"/>
    </reaction>
</comment>
<comment type="catalytic activity">
    <reaction evidence="2">
        <text>Li(+)(in) = Li(+)(out)</text>
        <dbReference type="Rhea" id="RHEA:78551"/>
        <dbReference type="ChEBI" id="CHEBI:49713"/>
    </reaction>
</comment>
<comment type="catalytic activity">
    <reaction evidence="2">
        <text>Cs(+)(in) = Cs(+)(out)</text>
        <dbReference type="Rhea" id="RHEA:78555"/>
        <dbReference type="ChEBI" id="CHEBI:49547"/>
    </reaction>
</comment>
<comment type="catalytic activity">
    <reaction evidence="2">
        <text>Ca(2+)(in) = Ca(2+)(out)</text>
        <dbReference type="Rhea" id="RHEA:29671"/>
        <dbReference type="ChEBI" id="CHEBI:29108"/>
    </reaction>
</comment>
<comment type="catalytic activity">
    <reaction evidence="2">
        <text>methylamine(out) = methylamine(in)</text>
        <dbReference type="Rhea" id="RHEA:74391"/>
        <dbReference type="ChEBI" id="CHEBI:59338"/>
    </reaction>
</comment>
<comment type="catalytic activity">
    <reaction evidence="2">
        <text>choline(out) = choline(in)</text>
        <dbReference type="Rhea" id="RHEA:32751"/>
        <dbReference type="ChEBI" id="CHEBI:15354"/>
    </reaction>
</comment>
<comment type="catalytic activity">
    <reaction evidence="2 3">
        <text>H2O(in) = H2O(out)</text>
        <dbReference type="Rhea" id="RHEA:29667"/>
        <dbReference type="ChEBI" id="CHEBI:15377"/>
    </reaction>
</comment>
<comment type="subunit">
    <text evidence="2">Can form homo- and heteropolymers with other claudins to mediate paracellular barrier and channel functions of tight junctions in response to physiological stimuli. Homopolymers interact with CLDN3, but not CLDN1, homopolymers. Directly interacts with TJP1/ZO-1, TJP2/ZO-2 and TJP3/ZO-3.</text>
</comment>
<comment type="subcellular location">
    <subcellularLocation>
        <location evidence="2">Cell junction</location>
        <location evidence="2">Tight junction</location>
    </subcellularLocation>
    <subcellularLocation>
        <location evidence="2">Cell membrane</location>
        <topology evidence="2">Multi-pass membrane protein</topology>
    </subcellularLocation>
</comment>
<comment type="PTM">
    <text evidence="2">The disulfide bond is necessary for pore formation, but is not required for correct protein trafficking.</text>
</comment>
<comment type="similarity">
    <text evidence="6">Belongs to the claudin family.</text>
</comment>
<organism>
    <name type="scientific">Canis lupus familiaris</name>
    <name type="common">Dog</name>
    <name type="synonym">Canis familiaris</name>
    <dbReference type="NCBI Taxonomy" id="9615"/>
    <lineage>
        <taxon>Eukaryota</taxon>
        <taxon>Metazoa</taxon>
        <taxon>Chordata</taxon>
        <taxon>Craniata</taxon>
        <taxon>Vertebrata</taxon>
        <taxon>Euteleostomi</taxon>
        <taxon>Mammalia</taxon>
        <taxon>Eutheria</taxon>
        <taxon>Laurasiatheria</taxon>
        <taxon>Carnivora</taxon>
        <taxon>Caniformia</taxon>
        <taxon>Canidae</taxon>
        <taxon>Canis</taxon>
    </lineage>
</organism>
<keyword id="KW-0965">Cell junction</keyword>
<keyword id="KW-1003">Cell membrane</keyword>
<keyword id="KW-1015">Disulfide bond</keyword>
<keyword id="KW-1017">Isopeptide bond</keyword>
<keyword id="KW-0472">Membrane</keyword>
<keyword id="KW-0597">Phosphoprotein</keyword>
<keyword id="KW-1185">Reference proteome</keyword>
<keyword id="KW-0796">Tight junction</keyword>
<keyword id="KW-0812">Transmembrane</keyword>
<keyword id="KW-1133">Transmembrane helix</keyword>
<keyword id="KW-0832">Ubl conjugation</keyword>
<accession>Q95KM6</accession>
<gene>
    <name type="primary">CLDN2</name>
</gene>
<reference key="1">
    <citation type="journal article" date="2001" name="J. Cell Biol.">
        <title>Conversion of zonulae occludentes from tight to leaky strand type by introducing claudin-2 into Madin-Darby canine kidney I cells.</title>
        <authorList>
            <person name="Furuse M."/>
            <person name="Furuse K."/>
            <person name="Sasaki H."/>
            <person name="Tsukita S."/>
        </authorList>
    </citation>
    <scope>NUCLEOTIDE SEQUENCE [MRNA]</scope>
    <source>
        <tissue>Liver</tissue>
    </source>
</reference>
<evidence type="ECO:0000250" key="1"/>
<evidence type="ECO:0000250" key="2">
    <source>
        <dbReference type="UniProtKB" id="O88552"/>
    </source>
</evidence>
<evidence type="ECO:0000250" key="3">
    <source>
        <dbReference type="UniProtKB" id="P57739"/>
    </source>
</evidence>
<evidence type="ECO:0000255" key="4"/>
<evidence type="ECO:0000256" key="5">
    <source>
        <dbReference type="SAM" id="MobiDB-lite"/>
    </source>
</evidence>
<evidence type="ECO:0000305" key="6"/>